<gene>
    <name type="ordered locus">ASA_1194</name>
</gene>
<protein>
    <recommendedName>
        <fullName evidence="1">Putative pre-16S rRNA nuclease</fullName>
        <ecNumber evidence="1">3.1.-.-</ecNumber>
    </recommendedName>
</protein>
<comment type="function">
    <text evidence="1">Could be a nuclease involved in processing of the 5'-end of pre-16S rRNA.</text>
</comment>
<comment type="subcellular location">
    <subcellularLocation>
        <location evidence="1">Cytoplasm</location>
    </subcellularLocation>
</comment>
<comment type="similarity">
    <text evidence="1">Belongs to the YqgF nuclease family.</text>
</comment>
<proteinExistence type="inferred from homology"/>
<accession>A4SK82</accession>
<name>YQGF_AERS4</name>
<reference key="1">
    <citation type="journal article" date="2008" name="BMC Genomics">
        <title>The genome of Aeromonas salmonicida subsp. salmonicida A449: insights into the evolution of a fish pathogen.</title>
        <authorList>
            <person name="Reith M.E."/>
            <person name="Singh R.K."/>
            <person name="Curtis B."/>
            <person name="Boyd J.M."/>
            <person name="Bouevitch A."/>
            <person name="Kimball J."/>
            <person name="Munholland J."/>
            <person name="Murphy C."/>
            <person name="Sarty D."/>
            <person name="Williams J."/>
            <person name="Nash J.H."/>
            <person name="Johnson S.C."/>
            <person name="Brown L.L."/>
        </authorList>
    </citation>
    <scope>NUCLEOTIDE SEQUENCE [LARGE SCALE GENOMIC DNA]</scope>
    <source>
        <strain>A449</strain>
    </source>
</reference>
<organism>
    <name type="scientific">Aeromonas salmonicida (strain A449)</name>
    <dbReference type="NCBI Taxonomy" id="382245"/>
    <lineage>
        <taxon>Bacteria</taxon>
        <taxon>Pseudomonadati</taxon>
        <taxon>Pseudomonadota</taxon>
        <taxon>Gammaproteobacteria</taxon>
        <taxon>Aeromonadales</taxon>
        <taxon>Aeromonadaceae</taxon>
        <taxon>Aeromonas</taxon>
    </lineage>
</organism>
<dbReference type="EC" id="3.1.-.-" evidence="1"/>
<dbReference type="EMBL" id="CP000644">
    <property type="protein sequence ID" value="ABO89304.1"/>
    <property type="molecule type" value="Genomic_DNA"/>
</dbReference>
<dbReference type="SMR" id="A4SK82"/>
<dbReference type="STRING" id="29491.GCA_000820065_00944"/>
<dbReference type="KEGG" id="asa:ASA_1194"/>
<dbReference type="eggNOG" id="COG0816">
    <property type="taxonomic scope" value="Bacteria"/>
</dbReference>
<dbReference type="HOGENOM" id="CLU_098240_3_0_6"/>
<dbReference type="Proteomes" id="UP000000225">
    <property type="component" value="Chromosome"/>
</dbReference>
<dbReference type="GO" id="GO:0005829">
    <property type="term" value="C:cytosol"/>
    <property type="evidence" value="ECO:0007669"/>
    <property type="project" value="TreeGrafter"/>
</dbReference>
<dbReference type="GO" id="GO:0004518">
    <property type="term" value="F:nuclease activity"/>
    <property type="evidence" value="ECO:0007669"/>
    <property type="project" value="UniProtKB-KW"/>
</dbReference>
<dbReference type="GO" id="GO:0000967">
    <property type="term" value="P:rRNA 5'-end processing"/>
    <property type="evidence" value="ECO:0007669"/>
    <property type="project" value="UniProtKB-UniRule"/>
</dbReference>
<dbReference type="CDD" id="cd16964">
    <property type="entry name" value="YqgF"/>
    <property type="match status" value="1"/>
</dbReference>
<dbReference type="FunFam" id="3.30.420.140:FF:000002">
    <property type="entry name" value="Putative pre-16S rRNA nuclease"/>
    <property type="match status" value="1"/>
</dbReference>
<dbReference type="Gene3D" id="3.30.420.140">
    <property type="entry name" value="YqgF/RNase H-like domain"/>
    <property type="match status" value="1"/>
</dbReference>
<dbReference type="HAMAP" id="MF_00651">
    <property type="entry name" value="Nuclease_YqgF"/>
    <property type="match status" value="1"/>
</dbReference>
<dbReference type="InterPro" id="IPR012337">
    <property type="entry name" value="RNaseH-like_sf"/>
</dbReference>
<dbReference type="InterPro" id="IPR005227">
    <property type="entry name" value="YqgF"/>
</dbReference>
<dbReference type="InterPro" id="IPR006641">
    <property type="entry name" value="YqgF/RNaseH-like_dom"/>
</dbReference>
<dbReference type="InterPro" id="IPR037027">
    <property type="entry name" value="YqgF/RNaseH-like_dom_sf"/>
</dbReference>
<dbReference type="NCBIfam" id="TIGR00250">
    <property type="entry name" value="RNAse_H_YqgF"/>
    <property type="match status" value="1"/>
</dbReference>
<dbReference type="PANTHER" id="PTHR33317">
    <property type="entry name" value="POLYNUCLEOTIDYL TRANSFERASE, RIBONUCLEASE H-LIKE SUPERFAMILY PROTEIN"/>
    <property type="match status" value="1"/>
</dbReference>
<dbReference type="PANTHER" id="PTHR33317:SF4">
    <property type="entry name" value="POLYNUCLEOTIDYL TRANSFERASE, RIBONUCLEASE H-LIKE SUPERFAMILY PROTEIN"/>
    <property type="match status" value="1"/>
</dbReference>
<dbReference type="Pfam" id="PF03652">
    <property type="entry name" value="RuvX"/>
    <property type="match status" value="1"/>
</dbReference>
<dbReference type="SMART" id="SM00732">
    <property type="entry name" value="YqgFc"/>
    <property type="match status" value="1"/>
</dbReference>
<dbReference type="SUPFAM" id="SSF53098">
    <property type="entry name" value="Ribonuclease H-like"/>
    <property type="match status" value="1"/>
</dbReference>
<sequence>MSSRSIMGFDYGTKSIGVAIGQELTGTAQPLRAIKANDGVPNWDDIEKLLKEWQPDLLVVGLPLNMDGTEQEITVRARKFGNRLHGRFGKQVEFKDERLTTTDARARLFERGGYKALDKGSVDGVSAQLILEAWMEEQYG</sequence>
<keyword id="KW-0963">Cytoplasm</keyword>
<keyword id="KW-0378">Hydrolase</keyword>
<keyword id="KW-0540">Nuclease</keyword>
<keyword id="KW-0690">Ribosome biogenesis</keyword>
<evidence type="ECO:0000255" key="1">
    <source>
        <dbReference type="HAMAP-Rule" id="MF_00651"/>
    </source>
</evidence>
<feature type="chain" id="PRO_1000061479" description="Putative pre-16S rRNA nuclease">
    <location>
        <begin position="1"/>
        <end position="140"/>
    </location>
</feature>